<protein>
    <recommendedName>
        <fullName>Chaperone protein dnaJ 39</fullName>
        <shortName>AtDjC39</shortName>
        <shortName>AtJ39</shortName>
    </recommendedName>
    <alternativeName>
        <fullName>Protein ARG1-LIKE 2</fullName>
        <shortName>AtARL2</shortName>
    </alternativeName>
</protein>
<reference key="1">
    <citation type="journal article" date="2003" name="Plant Physiol.">
        <title>The ARG1-LIKE2 gene of Arabidopsis functions in a gravity signal transduction pathway that is genetically distinct from the PGM pathway.</title>
        <authorList>
            <person name="Guan C."/>
            <person name="Rosen E.S."/>
            <person name="Boonsirichai K."/>
            <person name="Poff K.L."/>
            <person name="Masson P.H."/>
        </authorList>
    </citation>
    <scope>NUCLEOTIDE SEQUENCE [MRNA]</scope>
    <scope>FUNCTION</scope>
    <scope>TISSUE SPECIFICITY</scope>
    <source>
        <strain>cv. Wassilewskija</strain>
    </source>
</reference>
<reference key="2">
    <citation type="journal article" date="2000" name="Nature">
        <title>Sequence and analysis of chromosome 1 of the plant Arabidopsis thaliana.</title>
        <authorList>
            <person name="Theologis A."/>
            <person name="Ecker J.R."/>
            <person name="Palm C.J."/>
            <person name="Federspiel N.A."/>
            <person name="Kaul S."/>
            <person name="White O."/>
            <person name="Alonso J."/>
            <person name="Altafi H."/>
            <person name="Araujo R."/>
            <person name="Bowman C.L."/>
            <person name="Brooks S.Y."/>
            <person name="Buehler E."/>
            <person name="Chan A."/>
            <person name="Chao Q."/>
            <person name="Chen H."/>
            <person name="Cheuk R.F."/>
            <person name="Chin C.W."/>
            <person name="Chung M.K."/>
            <person name="Conn L."/>
            <person name="Conway A.B."/>
            <person name="Conway A.R."/>
            <person name="Creasy T.H."/>
            <person name="Dewar K."/>
            <person name="Dunn P."/>
            <person name="Etgu P."/>
            <person name="Feldblyum T.V."/>
            <person name="Feng J.-D."/>
            <person name="Fong B."/>
            <person name="Fujii C.Y."/>
            <person name="Gill J.E."/>
            <person name="Goldsmith A.D."/>
            <person name="Haas B."/>
            <person name="Hansen N.F."/>
            <person name="Hughes B."/>
            <person name="Huizar L."/>
            <person name="Hunter J.L."/>
            <person name="Jenkins J."/>
            <person name="Johnson-Hopson C."/>
            <person name="Khan S."/>
            <person name="Khaykin E."/>
            <person name="Kim C.J."/>
            <person name="Koo H.L."/>
            <person name="Kremenetskaia I."/>
            <person name="Kurtz D.B."/>
            <person name="Kwan A."/>
            <person name="Lam B."/>
            <person name="Langin-Hooper S."/>
            <person name="Lee A."/>
            <person name="Lee J.M."/>
            <person name="Lenz C.A."/>
            <person name="Li J.H."/>
            <person name="Li Y.-P."/>
            <person name="Lin X."/>
            <person name="Liu S.X."/>
            <person name="Liu Z.A."/>
            <person name="Luros J.S."/>
            <person name="Maiti R."/>
            <person name="Marziali A."/>
            <person name="Militscher J."/>
            <person name="Miranda M."/>
            <person name="Nguyen M."/>
            <person name="Nierman W.C."/>
            <person name="Osborne B.I."/>
            <person name="Pai G."/>
            <person name="Peterson J."/>
            <person name="Pham P.K."/>
            <person name="Rizzo M."/>
            <person name="Rooney T."/>
            <person name="Rowley D."/>
            <person name="Sakano H."/>
            <person name="Salzberg S.L."/>
            <person name="Schwartz J.R."/>
            <person name="Shinn P."/>
            <person name="Southwick A.M."/>
            <person name="Sun H."/>
            <person name="Tallon L.J."/>
            <person name="Tambunga G."/>
            <person name="Toriumi M.J."/>
            <person name="Town C.D."/>
            <person name="Utterback T."/>
            <person name="Van Aken S."/>
            <person name="Vaysberg M."/>
            <person name="Vysotskaia V.S."/>
            <person name="Walker M."/>
            <person name="Wu D."/>
            <person name="Yu G."/>
            <person name="Fraser C.M."/>
            <person name="Venter J.C."/>
            <person name="Davis R.W."/>
        </authorList>
    </citation>
    <scope>NUCLEOTIDE SEQUENCE [LARGE SCALE GENOMIC DNA]</scope>
    <source>
        <strain>cv. Columbia</strain>
    </source>
</reference>
<reference key="3">
    <citation type="journal article" date="2017" name="Plant J.">
        <title>Araport11: a complete reannotation of the Arabidopsis thaliana reference genome.</title>
        <authorList>
            <person name="Cheng C.Y."/>
            <person name="Krishnakumar V."/>
            <person name="Chan A.P."/>
            <person name="Thibaud-Nissen F."/>
            <person name="Schobel S."/>
            <person name="Town C.D."/>
        </authorList>
    </citation>
    <scope>GENOME REANNOTATION</scope>
    <source>
        <strain>cv. Columbia</strain>
    </source>
</reference>
<reference key="4">
    <citation type="journal article" date="2002" name="Science">
        <title>Functional annotation of a full-length Arabidopsis cDNA collection.</title>
        <authorList>
            <person name="Seki M."/>
            <person name="Narusaka M."/>
            <person name="Kamiya A."/>
            <person name="Ishida J."/>
            <person name="Satou M."/>
            <person name="Sakurai T."/>
            <person name="Nakajima M."/>
            <person name="Enju A."/>
            <person name="Akiyama K."/>
            <person name="Oono Y."/>
            <person name="Muramatsu M."/>
            <person name="Hayashizaki Y."/>
            <person name="Kawai J."/>
            <person name="Carninci P."/>
            <person name="Itoh M."/>
            <person name="Ishii Y."/>
            <person name="Arakawa T."/>
            <person name="Shibata K."/>
            <person name="Shinagawa A."/>
            <person name="Shinozaki K."/>
        </authorList>
    </citation>
    <scope>NUCLEOTIDE SEQUENCE [LARGE SCALE MRNA]</scope>
    <source>
        <strain>cv. Columbia</strain>
    </source>
</reference>
<reference key="5">
    <citation type="journal article" date="2003" name="Science">
        <title>Empirical analysis of transcriptional activity in the Arabidopsis genome.</title>
        <authorList>
            <person name="Yamada K."/>
            <person name="Lim J."/>
            <person name="Dale J.M."/>
            <person name="Chen H."/>
            <person name="Shinn P."/>
            <person name="Palm C.J."/>
            <person name="Southwick A.M."/>
            <person name="Wu H.C."/>
            <person name="Kim C.J."/>
            <person name="Nguyen M."/>
            <person name="Pham P.K."/>
            <person name="Cheuk R.F."/>
            <person name="Karlin-Newmann G."/>
            <person name="Liu S.X."/>
            <person name="Lam B."/>
            <person name="Sakano H."/>
            <person name="Wu T."/>
            <person name="Yu G."/>
            <person name="Miranda M."/>
            <person name="Quach H.L."/>
            <person name="Tripp M."/>
            <person name="Chang C.H."/>
            <person name="Lee J.M."/>
            <person name="Toriumi M.J."/>
            <person name="Chan M.M."/>
            <person name="Tang C.C."/>
            <person name="Onodera C.S."/>
            <person name="Deng J.M."/>
            <person name="Akiyama K."/>
            <person name="Ansari Y."/>
            <person name="Arakawa T."/>
            <person name="Banh J."/>
            <person name="Banno F."/>
            <person name="Bowser L."/>
            <person name="Brooks S.Y."/>
            <person name="Carninci P."/>
            <person name="Chao Q."/>
            <person name="Choy N."/>
            <person name="Enju A."/>
            <person name="Goldsmith A.D."/>
            <person name="Gurjal M."/>
            <person name="Hansen N.F."/>
            <person name="Hayashizaki Y."/>
            <person name="Johnson-Hopson C."/>
            <person name="Hsuan V.W."/>
            <person name="Iida K."/>
            <person name="Karnes M."/>
            <person name="Khan S."/>
            <person name="Koesema E."/>
            <person name="Ishida J."/>
            <person name="Jiang P.X."/>
            <person name="Jones T."/>
            <person name="Kawai J."/>
            <person name="Kamiya A."/>
            <person name="Meyers C."/>
            <person name="Nakajima M."/>
            <person name="Narusaka M."/>
            <person name="Seki M."/>
            <person name="Sakurai T."/>
            <person name="Satou M."/>
            <person name="Tamse R."/>
            <person name="Vaysberg M."/>
            <person name="Wallender E.K."/>
            <person name="Wong C."/>
            <person name="Yamamura Y."/>
            <person name="Yuan S."/>
            <person name="Shinozaki K."/>
            <person name="Davis R.W."/>
            <person name="Theologis A."/>
            <person name="Ecker J.R."/>
        </authorList>
    </citation>
    <scope>NUCLEOTIDE SEQUENCE [LARGE SCALE MRNA]</scope>
    <source>
        <strain>cv. Columbia</strain>
    </source>
</reference>
<reference key="6">
    <citation type="journal article" date="2001" name="Cell Stress Chaperones">
        <title>The J-domain proteins of Arabidopsis thaliana: an unexpectedly large and diverse family of chaperones.</title>
        <authorList>
            <person name="Miernyk J.A."/>
        </authorList>
    </citation>
    <scope>GENE FAMILY</scope>
    <scope>NOMENCLATURE</scope>
</reference>
<reference key="7">
    <citation type="journal article" date="2004" name="Plant Physiol.">
        <title>The fast and transient transcriptional network of gravity and mechanical stimulation in the Arabidopsis root apex.</title>
        <authorList>
            <person name="Kimbrough J.M."/>
            <person name="Salinas-Mondragon R."/>
            <person name="Boss W.F."/>
            <person name="Brown C.S."/>
            <person name="Sederoff H.W."/>
        </authorList>
    </citation>
    <scope>INDUCTION</scope>
</reference>
<evidence type="ECO:0000250" key="1"/>
<evidence type="ECO:0000255" key="2"/>
<evidence type="ECO:0000255" key="3">
    <source>
        <dbReference type="PROSITE-ProRule" id="PRU00286"/>
    </source>
</evidence>
<evidence type="ECO:0000256" key="4">
    <source>
        <dbReference type="SAM" id="MobiDB-lite"/>
    </source>
</evidence>
<evidence type="ECO:0000269" key="5">
    <source>
    </source>
</evidence>
<evidence type="ECO:0000269" key="6">
    <source>
    </source>
</evidence>
<evidence type="ECO:0000305" key="7"/>
<gene>
    <name type="primary">ATJ39</name>
    <name type="synonym">ARL2</name>
    <name type="synonym">C39</name>
    <name type="ordered locus">At1g59980</name>
    <name type="ORF">T2K10.3</name>
</gene>
<name>DNJ39_ARATH</name>
<accession>Q6XL73</accession>
<accession>Q8GWE4</accession>
<accession>Q9ZUJ4</accession>
<comment type="function">
    <text evidence="1 5">Plays a continuous role in plant development probably in the structural organization of compartments (By similarity). Seems to be involved in early gravitropic signal transduction within the gravity-perceiving cells (statocytes).</text>
</comment>
<comment type="subcellular location">
    <subcellularLocation>
        <location evidence="7">Membrane</location>
        <topology evidence="7">Peripheral membrane protein</topology>
    </subcellularLocation>
</comment>
<comment type="tissue specificity">
    <text evidence="5">Expressed constitutively at low levels in seedlings, roots, leaves, stems, flowers and siliques.</text>
</comment>
<comment type="induction">
    <text evidence="6">Up-regulated by mechanical and gravity stimulations.</text>
</comment>
<comment type="similarity">
    <text evidence="7">Belongs to the DnaJ family. C/III subfamily.</text>
</comment>
<comment type="sequence caution" evidence="7">
    <conflict type="erroneous gene model prediction">
        <sequence resource="EMBL-CDS" id="AAD14474"/>
    </conflict>
</comment>
<keyword id="KW-0143">Chaperone</keyword>
<keyword id="KW-0175">Coiled coil</keyword>
<keyword id="KW-0472">Membrane</keyword>
<keyword id="KW-1185">Reference proteome</keyword>
<dbReference type="EMBL" id="AY226826">
    <property type="protein sequence ID" value="AAP49705.1"/>
    <property type="molecule type" value="mRNA"/>
</dbReference>
<dbReference type="EMBL" id="AC005966">
    <property type="protein sequence ID" value="AAD14474.1"/>
    <property type="status" value="ALT_SEQ"/>
    <property type="molecule type" value="Genomic_DNA"/>
</dbReference>
<dbReference type="EMBL" id="CP002684">
    <property type="protein sequence ID" value="AEE33646.1"/>
    <property type="molecule type" value="Genomic_DNA"/>
</dbReference>
<dbReference type="EMBL" id="AK118901">
    <property type="protein sequence ID" value="BAC43485.1"/>
    <property type="molecule type" value="mRNA"/>
</dbReference>
<dbReference type="EMBL" id="BT005502">
    <property type="protein sequence ID" value="AAO63922.1"/>
    <property type="molecule type" value="mRNA"/>
</dbReference>
<dbReference type="PIR" id="A96624">
    <property type="entry name" value="A96624"/>
</dbReference>
<dbReference type="RefSeq" id="NP_176206.2">
    <property type="nucleotide sequence ID" value="NM_104690.4"/>
</dbReference>
<dbReference type="BioGRID" id="27517">
    <property type="interactions" value="1"/>
</dbReference>
<dbReference type="FunCoup" id="Q6XL73">
    <property type="interactions" value="206"/>
</dbReference>
<dbReference type="IntAct" id="Q6XL73">
    <property type="interactions" value="1"/>
</dbReference>
<dbReference type="STRING" id="3702.Q6XL73"/>
<dbReference type="PaxDb" id="3702-AT1G59980.1"/>
<dbReference type="EnsemblPlants" id="AT1G59980.1">
    <property type="protein sequence ID" value="AT1G59980.1"/>
    <property type="gene ID" value="AT1G59980"/>
</dbReference>
<dbReference type="GeneID" id="842292"/>
<dbReference type="Gramene" id="AT1G59980.1">
    <property type="protein sequence ID" value="AT1G59980.1"/>
    <property type="gene ID" value="AT1G59980"/>
</dbReference>
<dbReference type="KEGG" id="ath:AT1G59980"/>
<dbReference type="Araport" id="AT1G59980"/>
<dbReference type="TAIR" id="AT1G59980">
    <property type="gene designation" value="ARL2"/>
</dbReference>
<dbReference type="eggNOG" id="KOG0713">
    <property type="taxonomic scope" value="Eukaryota"/>
</dbReference>
<dbReference type="HOGENOM" id="CLU_031086_0_0_1"/>
<dbReference type="InParanoid" id="Q6XL73"/>
<dbReference type="PhylomeDB" id="Q6XL73"/>
<dbReference type="PRO" id="PR:Q6XL73"/>
<dbReference type="Proteomes" id="UP000006548">
    <property type="component" value="Chromosome 1"/>
</dbReference>
<dbReference type="ExpressionAtlas" id="Q6XL73">
    <property type="expression patterns" value="baseline and differential"/>
</dbReference>
<dbReference type="GO" id="GO:0016020">
    <property type="term" value="C:membrane"/>
    <property type="evidence" value="ECO:0007669"/>
    <property type="project" value="UniProtKB-SubCell"/>
</dbReference>
<dbReference type="CDD" id="cd06257">
    <property type="entry name" value="DnaJ"/>
    <property type="match status" value="1"/>
</dbReference>
<dbReference type="FunFam" id="1.10.287.110:FF:000097">
    <property type="entry name" value="Chaperone protein dnaJ 16"/>
    <property type="match status" value="1"/>
</dbReference>
<dbReference type="Gene3D" id="1.10.287.110">
    <property type="entry name" value="DnaJ domain"/>
    <property type="match status" value="1"/>
</dbReference>
<dbReference type="InterPro" id="IPR001623">
    <property type="entry name" value="DnaJ_domain"/>
</dbReference>
<dbReference type="InterPro" id="IPR018253">
    <property type="entry name" value="DnaJ_domain_CS"/>
</dbReference>
<dbReference type="InterPro" id="IPR036869">
    <property type="entry name" value="J_dom_sf"/>
</dbReference>
<dbReference type="InterPro" id="IPR052812">
    <property type="entry name" value="Plant_DnaJ_domain"/>
</dbReference>
<dbReference type="PANTHER" id="PTHR44272:SF5">
    <property type="entry name" value="CHAPERONE PROTEIN DNAJ 39"/>
    <property type="match status" value="1"/>
</dbReference>
<dbReference type="PANTHER" id="PTHR44272">
    <property type="entry name" value="DNAJ DOMAIN (PROKARYOTIC HEAT SHOCK PROTEIN)"/>
    <property type="match status" value="1"/>
</dbReference>
<dbReference type="Pfam" id="PF00226">
    <property type="entry name" value="DnaJ"/>
    <property type="match status" value="1"/>
</dbReference>
<dbReference type="PRINTS" id="PR00625">
    <property type="entry name" value="JDOMAIN"/>
</dbReference>
<dbReference type="SMART" id="SM00271">
    <property type="entry name" value="DnaJ"/>
    <property type="match status" value="1"/>
</dbReference>
<dbReference type="SUPFAM" id="SSF46565">
    <property type="entry name" value="Chaperone J-domain"/>
    <property type="match status" value="1"/>
</dbReference>
<dbReference type="PROSITE" id="PS00636">
    <property type="entry name" value="DNAJ_1"/>
    <property type="match status" value="1"/>
</dbReference>
<dbReference type="PROSITE" id="PS50076">
    <property type="entry name" value="DNAJ_2"/>
    <property type="match status" value="1"/>
</dbReference>
<proteinExistence type="evidence at transcript level"/>
<feature type="chain" id="PRO_0000071085" description="Chaperone protein dnaJ 39">
    <location>
        <begin position="1"/>
        <end position="414"/>
    </location>
</feature>
<feature type="domain" description="J" evidence="3">
    <location>
        <begin position="23"/>
        <end position="88"/>
    </location>
</feature>
<feature type="region of interest" description="Disordered" evidence="4">
    <location>
        <begin position="1"/>
        <end position="36"/>
    </location>
</feature>
<feature type="region of interest" description="Disordered" evidence="4">
    <location>
        <begin position="362"/>
        <end position="395"/>
    </location>
</feature>
<feature type="coiled-coil region" evidence="2">
    <location>
        <begin position="296"/>
        <end position="324"/>
    </location>
</feature>
<feature type="compositionally biased region" description="Basic and acidic residues" evidence="4">
    <location>
        <begin position="1"/>
        <end position="24"/>
    </location>
</feature>
<feature type="compositionally biased region" description="Basic and acidic residues" evidence="4">
    <location>
        <begin position="382"/>
        <end position="395"/>
    </location>
</feature>
<feature type="sequence conflict" description="In Ref. 1; AAP49705." evidence="7" ref="1">
    <original>E</original>
    <variation>D</variation>
    <location>
        <position position="63"/>
    </location>
</feature>
<feature type="sequence conflict" description="In Ref. 1; AAP49705." evidence="7" ref="1">
    <original>A</original>
    <variation>S</variation>
    <location>
        <position position="319"/>
    </location>
</feature>
<sequence length="414" mass="46785">MATHSSRSENKDAGEEDELRRRNPYEVLGIPSNSTDQEIKSAYRRMALRYHPDKNPDDPVAAEMFKEVTFAYEVLSDPENRRLYDTTGSEAVGPENEDLELDLSSLGAVNTIFAALFNKLGVQIKTTVSANLLGEALNGTVTTLPLMVGQVVSRKVEKQSAHFYSVTLTEEEAQDGLICKVHSSAKNKFKLLYFDQVENGGLSLALQEDSRKTGKLSTAGLYFFGFPVYRFDHRVNSRALSRDPETGFFKRLDAFQPFEITELKAGSHVFAVYGDNFFKSVSYTLEIFSSAPFGNEKESLRSTEAQIVSKRTELLKFEAEYHEVFAQFTEMASKCTGEVQEIDELLKRRNEICAAYTIFPPTKQGSSKSRSWSKKKSSLLMEPREEGEVAVREEGGVKKKKWYNIQLRQDKKKN</sequence>
<organism>
    <name type="scientific">Arabidopsis thaliana</name>
    <name type="common">Mouse-ear cress</name>
    <dbReference type="NCBI Taxonomy" id="3702"/>
    <lineage>
        <taxon>Eukaryota</taxon>
        <taxon>Viridiplantae</taxon>
        <taxon>Streptophyta</taxon>
        <taxon>Embryophyta</taxon>
        <taxon>Tracheophyta</taxon>
        <taxon>Spermatophyta</taxon>
        <taxon>Magnoliopsida</taxon>
        <taxon>eudicotyledons</taxon>
        <taxon>Gunneridae</taxon>
        <taxon>Pentapetalae</taxon>
        <taxon>rosids</taxon>
        <taxon>malvids</taxon>
        <taxon>Brassicales</taxon>
        <taxon>Brassicaceae</taxon>
        <taxon>Camelineae</taxon>
        <taxon>Arabidopsis</taxon>
    </lineage>
</organism>